<protein>
    <recommendedName>
        <fullName>UPF0270 protein HI_0956</fullName>
    </recommendedName>
</protein>
<reference key="1">
    <citation type="journal article" date="1995" name="Science">
        <title>Whole-genome random sequencing and assembly of Haemophilus influenzae Rd.</title>
        <authorList>
            <person name="Fleischmann R.D."/>
            <person name="Adams M.D."/>
            <person name="White O."/>
            <person name="Clayton R.A."/>
            <person name="Kirkness E.F."/>
            <person name="Kerlavage A.R."/>
            <person name="Bult C.J."/>
            <person name="Tomb J.-F."/>
            <person name="Dougherty B.A."/>
            <person name="Merrick J.M."/>
            <person name="McKenney K."/>
            <person name="Sutton G.G."/>
            <person name="FitzHugh W."/>
            <person name="Fields C.A."/>
            <person name="Gocayne J.D."/>
            <person name="Scott J.D."/>
            <person name="Shirley R."/>
            <person name="Liu L.-I."/>
            <person name="Glodek A."/>
            <person name="Kelley J.M."/>
            <person name="Weidman J.F."/>
            <person name="Phillips C.A."/>
            <person name="Spriggs T."/>
            <person name="Hedblom E."/>
            <person name="Cotton M.D."/>
            <person name="Utterback T.R."/>
            <person name="Hanna M.C."/>
            <person name="Nguyen D.T."/>
            <person name="Saudek D.M."/>
            <person name="Brandon R.C."/>
            <person name="Fine L.D."/>
            <person name="Fritchman J.L."/>
            <person name="Fuhrmann J.L."/>
            <person name="Geoghagen N.S.M."/>
            <person name="Gnehm C.L."/>
            <person name="McDonald L.A."/>
            <person name="Small K.V."/>
            <person name="Fraser C.M."/>
            <person name="Smith H.O."/>
            <person name="Venter J.C."/>
        </authorList>
    </citation>
    <scope>NUCLEOTIDE SEQUENCE [LARGE SCALE GENOMIC DNA]</scope>
    <source>
        <strain>ATCC 51907 / DSM 11121 / KW20 / Rd</strain>
    </source>
</reference>
<proteinExistence type="inferred from homology"/>
<gene>
    <name type="ordered locus">HI_0956</name>
</gene>
<feature type="chain" id="PRO_0000214851" description="UPF0270 protein HI_0956">
    <location>
        <begin position="1"/>
        <end position="83"/>
    </location>
</feature>
<keyword id="KW-1185">Reference proteome</keyword>
<organism>
    <name type="scientific">Haemophilus influenzae (strain ATCC 51907 / DSM 11121 / KW20 / Rd)</name>
    <dbReference type="NCBI Taxonomy" id="71421"/>
    <lineage>
        <taxon>Bacteria</taxon>
        <taxon>Pseudomonadati</taxon>
        <taxon>Pseudomonadota</taxon>
        <taxon>Gammaproteobacteria</taxon>
        <taxon>Pasteurellales</taxon>
        <taxon>Pasteurellaceae</taxon>
        <taxon>Haemophilus</taxon>
    </lineage>
</organism>
<evidence type="ECO:0000305" key="1"/>
<accession>P44954</accession>
<comment type="similarity">
    <text evidence="1">Belongs to the UPF0270 family.</text>
</comment>
<comment type="sequence caution" evidence="1">
    <conflict type="frameshift">
        <sequence resource="EMBL-CDS" id="AAC22617"/>
    </conflict>
</comment>
<sequence>MIIPWQELEAETLDNIVESVILREGTDYGIEELSLNQKKQLLLTQIRNGIALIVWSELHESIDIKNKTEFLKQECKEQECQMN</sequence>
<dbReference type="EMBL" id="L42023">
    <property type="protein sequence ID" value="AAC22617.1"/>
    <property type="status" value="ALT_FRAME"/>
    <property type="molecule type" value="Genomic_DNA"/>
</dbReference>
<dbReference type="PIR" id="E64162">
    <property type="entry name" value="E64162"/>
</dbReference>
<dbReference type="SMR" id="P44954"/>
<dbReference type="STRING" id="71421.HI_0956"/>
<dbReference type="EnsemblBacteria" id="AAC22617">
    <property type="protein sequence ID" value="AAC22617"/>
    <property type="gene ID" value="HI_0956"/>
</dbReference>
<dbReference type="KEGG" id="hin:HI_0956"/>
<dbReference type="eggNOG" id="COG3089">
    <property type="taxonomic scope" value="Bacteria"/>
</dbReference>
<dbReference type="HOGENOM" id="CLU_3007947_0_0_6"/>
<dbReference type="PhylomeDB" id="P44954"/>
<dbReference type="Proteomes" id="UP000000579">
    <property type="component" value="Chromosome"/>
</dbReference>
<dbReference type="Gene3D" id="1.10.10.610">
    <property type="entry name" value="YehU-like"/>
    <property type="match status" value="1"/>
</dbReference>
<dbReference type="HAMAP" id="MF_00690">
    <property type="entry name" value="UPF0270"/>
    <property type="match status" value="1"/>
</dbReference>
<dbReference type="InterPro" id="IPR010648">
    <property type="entry name" value="UPF0270"/>
</dbReference>
<dbReference type="InterPro" id="IPR036685">
    <property type="entry name" value="YehU-like_sf"/>
</dbReference>
<dbReference type="NCBIfam" id="NF003438">
    <property type="entry name" value="PRK04966.1"/>
    <property type="match status" value="1"/>
</dbReference>
<dbReference type="Pfam" id="PF06794">
    <property type="entry name" value="UPF0270"/>
    <property type="match status" value="1"/>
</dbReference>
<dbReference type="PIRSF" id="PIRSF006169">
    <property type="entry name" value="UCP006169"/>
    <property type="match status" value="1"/>
</dbReference>
<dbReference type="SUPFAM" id="SSF118001">
    <property type="entry name" value="YehU-like"/>
    <property type="match status" value="1"/>
</dbReference>
<name>Y956_HAEIN</name>